<evidence type="ECO:0000255" key="1">
    <source>
        <dbReference type="HAMAP-Rule" id="MF_01370"/>
    </source>
</evidence>
<comment type="subunit">
    <text evidence="1">Part of the photosystem II complex.</text>
</comment>
<comment type="subcellular location">
    <subcellularLocation>
        <location evidence="1">Cellular thylakoid membrane</location>
        <topology evidence="1">Peripheral membrane protein</topology>
        <orientation evidence="1">Cytoplasmic side</orientation>
    </subcellularLocation>
</comment>
<comment type="similarity">
    <text evidence="1">Belongs to the Psb28 family.</text>
</comment>
<accession>Q7TU94</accession>
<name>PSB28_PROMP</name>
<sequence>MAENNLAKIQFYEGTDEPVVPEIRLTRGNDGTTGQAIFIFEKPQALSSVADGEITGMRMIDAEGEILTREVKVKFVDGEPMFLEGTYIWKTKSDFDRFMRFANSYAKSNGLGYSEKK</sequence>
<keyword id="KW-0472">Membrane</keyword>
<keyword id="KW-0602">Photosynthesis</keyword>
<keyword id="KW-0604">Photosystem II</keyword>
<keyword id="KW-0793">Thylakoid</keyword>
<feature type="chain" id="PRO_0000271565" description="Photosystem II reaction center Psb28 protein">
    <location>
        <begin position="1"/>
        <end position="117"/>
    </location>
</feature>
<gene>
    <name evidence="1" type="primary">psb28</name>
    <name type="ordered locus">PMM0926</name>
</gene>
<protein>
    <recommendedName>
        <fullName evidence="1">Photosystem II reaction center Psb28 protein</fullName>
    </recommendedName>
    <alternativeName>
        <fullName evidence="1">Photosystem II 13 kDa protein</fullName>
    </alternativeName>
    <alternativeName>
        <fullName evidence="1">Photosystem II reaction center W protein</fullName>
    </alternativeName>
</protein>
<proteinExistence type="inferred from homology"/>
<reference key="1">
    <citation type="journal article" date="2003" name="Nature">
        <title>Genome divergence in two Prochlorococcus ecotypes reflects oceanic niche differentiation.</title>
        <authorList>
            <person name="Rocap G."/>
            <person name="Larimer F.W."/>
            <person name="Lamerdin J.E."/>
            <person name="Malfatti S."/>
            <person name="Chain P."/>
            <person name="Ahlgren N.A."/>
            <person name="Arellano A."/>
            <person name="Coleman M."/>
            <person name="Hauser L."/>
            <person name="Hess W.R."/>
            <person name="Johnson Z.I."/>
            <person name="Land M.L."/>
            <person name="Lindell D."/>
            <person name="Post A.F."/>
            <person name="Regala W."/>
            <person name="Shah M."/>
            <person name="Shaw S.L."/>
            <person name="Steglich C."/>
            <person name="Sullivan M.B."/>
            <person name="Ting C.S."/>
            <person name="Tolonen A."/>
            <person name="Webb E.A."/>
            <person name="Zinser E.R."/>
            <person name="Chisholm S.W."/>
        </authorList>
    </citation>
    <scope>NUCLEOTIDE SEQUENCE [LARGE SCALE GENOMIC DNA]</scope>
    <source>
        <strain>CCMP1986 / NIES-2087 / MED4</strain>
    </source>
</reference>
<dbReference type="EMBL" id="BX548174">
    <property type="protein sequence ID" value="CAE19385.1"/>
    <property type="molecule type" value="Genomic_DNA"/>
</dbReference>
<dbReference type="RefSeq" id="WP_011132559.1">
    <property type="nucleotide sequence ID" value="NC_005072.1"/>
</dbReference>
<dbReference type="SMR" id="Q7TU94"/>
<dbReference type="STRING" id="59919.PMM0926"/>
<dbReference type="KEGG" id="pmm:PMM0926"/>
<dbReference type="eggNOG" id="ENOG5031GDS">
    <property type="taxonomic scope" value="Bacteria"/>
</dbReference>
<dbReference type="HOGENOM" id="CLU_137323_1_0_3"/>
<dbReference type="OrthoDB" id="559598at2"/>
<dbReference type="Proteomes" id="UP000001026">
    <property type="component" value="Chromosome"/>
</dbReference>
<dbReference type="GO" id="GO:0009654">
    <property type="term" value="C:photosystem II oxygen evolving complex"/>
    <property type="evidence" value="ECO:0007669"/>
    <property type="project" value="InterPro"/>
</dbReference>
<dbReference type="GO" id="GO:0031676">
    <property type="term" value="C:plasma membrane-derived thylakoid membrane"/>
    <property type="evidence" value="ECO:0007669"/>
    <property type="project" value="UniProtKB-SubCell"/>
</dbReference>
<dbReference type="GO" id="GO:0015979">
    <property type="term" value="P:photosynthesis"/>
    <property type="evidence" value="ECO:0007669"/>
    <property type="project" value="UniProtKB-UniRule"/>
</dbReference>
<dbReference type="Gene3D" id="2.40.30.220">
    <property type="entry name" value="Photosystem II Psb28"/>
    <property type="match status" value="1"/>
</dbReference>
<dbReference type="HAMAP" id="MF_01370">
    <property type="entry name" value="PSII_Psb28"/>
    <property type="match status" value="1"/>
</dbReference>
<dbReference type="InterPro" id="IPR038676">
    <property type="entry name" value="Psb28_c1_sf"/>
</dbReference>
<dbReference type="InterPro" id="IPR005610">
    <property type="entry name" value="PSII_Psb28_class-1"/>
</dbReference>
<dbReference type="NCBIfam" id="TIGR03047">
    <property type="entry name" value="PS_II_psb28"/>
    <property type="match status" value="1"/>
</dbReference>
<dbReference type="PANTHER" id="PTHR34963">
    <property type="match status" value="1"/>
</dbReference>
<dbReference type="PANTHER" id="PTHR34963:SF2">
    <property type="entry name" value="PHOTOSYSTEM II REACTION CENTER PSB28 PROTEIN, CHLOROPLASTIC"/>
    <property type="match status" value="1"/>
</dbReference>
<dbReference type="Pfam" id="PF03912">
    <property type="entry name" value="Psb28"/>
    <property type="match status" value="1"/>
</dbReference>
<organism>
    <name type="scientific">Prochlorococcus marinus subsp. pastoris (strain CCMP1986 / NIES-2087 / MED4)</name>
    <dbReference type="NCBI Taxonomy" id="59919"/>
    <lineage>
        <taxon>Bacteria</taxon>
        <taxon>Bacillati</taxon>
        <taxon>Cyanobacteriota</taxon>
        <taxon>Cyanophyceae</taxon>
        <taxon>Synechococcales</taxon>
        <taxon>Prochlorococcaceae</taxon>
        <taxon>Prochlorococcus</taxon>
    </lineage>
</organism>